<dbReference type="EMBL" id="AL132960">
    <property type="protein sequence ID" value="CAB88334.1"/>
    <property type="molecule type" value="Genomic_DNA"/>
</dbReference>
<dbReference type="EMBL" id="CP002686">
    <property type="protein sequence ID" value="AEE79132.1"/>
    <property type="molecule type" value="Genomic_DNA"/>
</dbReference>
<dbReference type="EMBL" id="BT002529">
    <property type="protein sequence ID" value="AAO00889.1"/>
    <property type="molecule type" value="mRNA"/>
</dbReference>
<dbReference type="EMBL" id="BT010870">
    <property type="protein sequence ID" value="AAR24648.1"/>
    <property type="molecule type" value="mRNA"/>
</dbReference>
<dbReference type="EMBL" id="AK227229">
    <property type="protein sequence ID" value="BAE99266.1"/>
    <property type="molecule type" value="mRNA"/>
</dbReference>
<dbReference type="EMBL" id="AY926476">
    <property type="protein sequence ID" value="AAX49548.1"/>
    <property type="molecule type" value="mRNA"/>
</dbReference>
<dbReference type="PIR" id="T45912">
    <property type="entry name" value="T45912"/>
</dbReference>
<dbReference type="RefSeq" id="NP_190940.1">
    <property type="nucleotide sequence ID" value="NM_115232.3"/>
</dbReference>
<dbReference type="SMR" id="Q9M353"/>
<dbReference type="BioGRID" id="9856">
    <property type="interactions" value="7"/>
</dbReference>
<dbReference type="FunCoup" id="Q9M353">
    <property type="interactions" value="239"/>
</dbReference>
<dbReference type="IntAct" id="Q9M353">
    <property type="interactions" value="6"/>
</dbReference>
<dbReference type="STRING" id="3702.Q9M353"/>
<dbReference type="TCDB" id="2.A.37.4.8">
    <property type="family name" value="the monovalent cation:proton antiporter-2 (cpa2) family"/>
</dbReference>
<dbReference type="iPTMnet" id="Q9M353"/>
<dbReference type="PaxDb" id="3702-AT3G53720.1"/>
<dbReference type="ProteomicsDB" id="246919"/>
<dbReference type="EnsemblPlants" id="AT3G53720.1">
    <property type="protein sequence ID" value="AT3G53720.1"/>
    <property type="gene ID" value="AT3G53720"/>
</dbReference>
<dbReference type="GeneID" id="824539"/>
<dbReference type="Gramene" id="AT3G53720.1">
    <property type="protein sequence ID" value="AT3G53720.1"/>
    <property type="gene ID" value="AT3G53720"/>
</dbReference>
<dbReference type="KEGG" id="ath:AT3G53720"/>
<dbReference type="Araport" id="AT3G53720"/>
<dbReference type="TAIR" id="AT3G53720">
    <property type="gene designation" value="CHX20"/>
</dbReference>
<dbReference type="eggNOG" id="KOG1650">
    <property type="taxonomic scope" value="Eukaryota"/>
</dbReference>
<dbReference type="HOGENOM" id="CLU_005126_6_2_1"/>
<dbReference type="InParanoid" id="Q9M353"/>
<dbReference type="PhylomeDB" id="Q9M353"/>
<dbReference type="PRO" id="PR:Q9M353"/>
<dbReference type="Proteomes" id="UP000006548">
    <property type="component" value="Chromosome 3"/>
</dbReference>
<dbReference type="ExpressionAtlas" id="Q9M353">
    <property type="expression patterns" value="baseline and differential"/>
</dbReference>
<dbReference type="GO" id="GO:0012505">
    <property type="term" value="C:endomembrane system"/>
    <property type="evidence" value="ECO:0000314"/>
    <property type="project" value="TAIR"/>
</dbReference>
<dbReference type="GO" id="GO:0005783">
    <property type="term" value="C:endoplasmic reticulum"/>
    <property type="evidence" value="ECO:0000314"/>
    <property type="project" value="TAIR"/>
</dbReference>
<dbReference type="GO" id="GO:0016020">
    <property type="term" value="C:membrane"/>
    <property type="evidence" value="ECO:0007669"/>
    <property type="project" value="UniProtKB-KW"/>
</dbReference>
<dbReference type="GO" id="GO:0015297">
    <property type="term" value="F:antiporter activity"/>
    <property type="evidence" value="ECO:0007669"/>
    <property type="project" value="UniProtKB-KW"/>
</dbReference>
<dbReference type="GO" id="GO:0030007">
    <property type="term" value="P:intracellular potassium ion homeostasis"/>
    <property type="evidence" value="ECO:0000315"/>
    <property type="project" value="TAIR"/>
</dbReference>
<dbReference type="GO" id="GO:0006813">
    <property type="term" value="P:potassium ion transport"/>
    <property type="evidence" value="ECO:0007669"/>
    <property type="project" value="UniProtKB-KW"/>
</dbReference>
<dbReference type="GO" id="GO:0006623">
    <property type="term" value="P:protein targeting to vacuole"/>
    <property type="evidence" value="ECO:0000315"/>
    <property type="project" value="TAIR"/>
</dbReference>
<dbReference type="GO" id="GO:1902600">
    <property type="term" value="P:proton transmembrane transport"/>
    <property type="evidence" value="ECO:0007669"/>
    <property type="project" value="InterPro"/>
</dbReference>
<dbReference type="GO" id="GO:0006885">
    <property type="term" value="P:regulation of pH"/>
    <property type="evidence" value="ECO:0000315"/>
    <property type="project" value="TAIR"/>
</dbReference>
<dbReference type="FunFam" id="1.20.1530.20:FF:000003">
    <property type="entry name" value="Cation/H(+) antiporter 15"/>
    <property type="match status" value="1"/>
</dbReference>
<dbReference type="Gene3D" id="1.20.1530.20">
    <property type="match status" value="1"/>
</dbReference>
<dbReference type="InterPro" id="IPR006153">
    <property type="entry name" value="Cation/H_exchanger_TM"/>
</dbReference>
<dbReference type="InterPro" id="IPR050794">
    <property type="entry name" value="CPA2_transporter"/>
</dbReference>
<dbReference type="InterPro" id="IPR038770">
    <property type="entry name" value="Na+/solute_symporter_sf"/>
</dbReference>
<dbReference type="PANTHER" id="PTHR32468">
    <property type="entry name" value="CATION/H + ANTIPORTER"/>
    <property type="match status" value="1"/>
</dbReference>
<dbReference type="PANTHER" id="PTHR32468:SF0">
    <property type="entry name" value="K(+)_H(+) ANTIPORTER 1"/>
    <property type="match status" value="1"/>
</dbReference>
<dbReference type="Pfam" id="PF23256">
    <property type="entry name" value="CHX17_2nd"/>
    <property type="match status" value="1"/>
</dbReference>
<dbReference type="Pfam" id="PF23259">
    <property type="entry name" value="CHX17_C"/>
    <property type="match status" value="1"/>
</dbReference>
<dbReference type="Pfam" id="PF00999">
    <property type="entry name" value="Na_H_Exchanger"/>
    <property type="match status" value="1"/>
</dbReference>
<organism>
    <name type="scientific">Arabidopsis thaliana</name>
    <name type="common">Mouse-ear cress</name>
    <dbReference type="NCBI Taxonomy" id="3702"/>
    <lineage>
        <taxon>Eukaryota</taxon>
        <taxon>Viridiplantae</taxon>
        <taxon>Streptophyta</taxon>
        <taxon>Embryophyta</taxon>
        <taxon>Tracheophyta</taxon>
        <taxon>Spermatophyta</taxon>
        <taxon>Magnoliopsida</taxon>
        <taxon>eudicotyledons</taxon>
        <taxon>Gunneridae</taxon>
        <taxon>Pentapetalae</taxon>
        <taxon>rosids</taxon>
        <taxon>malvids</taxon>
        <taxon>Brassicales</taxon>
        <taxon>Brassicaceae</taxon>
        <taxon>Camelineae</taxon>
        <taxon>Arabidopsis</taxon>
    </lineage>
</organism>
<proteinExistence type="evidence at transcript level"/>
<sequence length="842" mass="91553">MPFNITSVKTSSNGVWQGDNPLNFAFPLLIVQTALIIAVSRFLAVLFKPLRQPKVIAEIVGGILLGPSALGRNMAYMDRIFPKWSMPILESVASIGLLFFLFLVGLELDLSSIRRSGKRAFGIAVAGITLPFIAGVGVAFVIRNTLYTAADKPGYAEFLVFMGVALSITAFPVLARILAELKLLTTQIGETAMAAAAFNDVAAWILLALAVALAGNGGEGGGEKKSPLVSLWVLLSGAGFVVFMLVVIRPGMKWVAKRGSPENDVVRESYVCLTLAGVMVSGFATDLIGIHSIFGAFVFGLTIPKDGEFGQRLIERIEDFVSGLLLPLYFATSGLKTDVAKIRGAESWGMLGLVVVTACAGKIVGTFVVAVMVKVPAREALTLGFLMNTKGLVELIVLNIGKEKKVLNDETFAILVLMALFTTFITTPTVMAIYKPARGTHRKLKDLSASQDSTKEELRILACLHGPANVSSLISLVESIRTTKILRLKLFVMHLMELTERSSSIIMVQRARKNGLPFVHRYRHGERHSNVIGGFEAYRQLGRVAVRPITAVSPLPTMHEDICHMADTKRVTMIILPFHKRWNADHGHSHHHQDGGGDGNVPENVGHGWRLVNQRVLKNAPCSVAVLVDRGLGSIEAQTLSLDGSNVVERVCVIFFGGPDDRESIELGGRMAEHPAVKVTVIRFLVRETLRSTAVTLRPAPSKGKEKNYAFLTTNVDPEKEKELDEGALEDFKSKWKEMVEYKEKEPNNIIEEILSIGQSKDFDLIVVGRGRIPSAEVAALAERQAEHPELGPIGDVLASSINHIIPSILVVQQHNKAHVEDITVSKIVSESSLSINGDTNV</sequence>
<feature type="chain" id="PRO_0000394990" description="Cation/H(+) antiporter 20">
    <location>
        <begin position="1"/>
        <end position="842"/>
    </location>
</feature>
<feature type="transmembrane region" description="Helical" evidence="1">
    <location>
        <begin position="26"/>
        <end position="46"/>
    </location>
</feature>
<feature type="transmembrane region" description="Helical" evidence="1">
    <location>
        <begin position="55"/>
        <end position="75"/>
    </location>
</feature>
<feature type="transmembrane region" description="Helical" evidence="1">
    <location>
        <begin position="86"/>
        <end position="106"/>
    </location>
</feature>
<feature type="transmembrane region" description="Helical" evidence="1">
    <location>
        <begin position="122"/>
        <end position="142"/>
    </location>
</feature>
<feature type="transmembrane region" description="Helical" evidence="1">
    <location>
        <begin position="155"/>
        <end position="175"/>
    </location>
</feature>
<feature type="transmembrane region" description="Helical" evidence="1">
    <location>
        <begin position="193"/>
        <end position="213"/>
    </location>
</feature>
<feature type="transmembrane region" description="Helical" evidence="1">
    <location>
        <begin position="228"/>
        <end position="248"/>
    </location>
</feature>
<feature type="transmembrane region" description="Helical" evidence="1">
    <location>
        <begin position="283"/>
        <end position="303"/>
    </location>
</feature>
<feature type="transmembrane region" description="Helical" evidence="1">
    <location>
        <begin position="320"/>
        <end position="340"/>
    </location>
</feature>
<feature type="transmembrane region" description="Helical" evidence="1">
    <location>
        <begin position="353"/>
        <end position="373"/>
    </location>
</feature>
<feature type="transmembrane region" description="Helical" evidence="1">
    <location>
        <begin position="380"/>
        <end position="400"/>
    </location>
</feature>
<feature type="transmembrane region" description="Helical" evidence="1">
    <location>
        <begin position="413"/>
        <end position="433"/>
    </location>
</feature>
<feature type="region of interest" description="Disordered" evidence="2">
    <location>
        <begin position="585"/>
        <end position="605"/>
    </location>
</feature>
<feature type="compositionally biased region" description="Basic and acidic residues" evidence="2">
    <location>
        <begin position="585"/>
        <end position="595"/>
    </location>
</feature>
<accession>Q9M353</accession>
<accession>Q58P63</accession>
<gene>
    <name type="primary">CHX20</name>
    <name type="ordered locus">At3g53720</name>
    <name type="ORF">F5K20_20</name>
</gene>
<reference key="1">
    <citation type="journal article" date="2000" name="Nature">
        <title>Sequence and analysis of chromosome 3 of the plant Arabidopsis thaliana.</title>
        <authorList>
            <person name="Salanoubat M."/>
            <person name="Lemcke K."/>
            <person name="Rieger M."/>
            <person name="Ansorge W."/>
            <person name="Unseld M."/>
            <person name="Fartmann B."/>
            <person name="Valle G."/>
            <person name="Bloecker H."/>
            <person name="Perez-Alonso M."/>
            <person name="Obermaier B."/>
            <person name="Delseny M."/>
            <person name="Boutry M."/>
            <person name="Grivell L.A."/>
            <person name="Mache R."/>
            <person name="Puigdomenech P."/>
            <person name="De Simone V."/>
            <person name="Choisne N."/>
            <person name="Artiguenave F."/>
            <person name="Robert C."/>
            <person name="Brottier P."/>
            <person name="Wincker P."/>
            <person name="Cattolico L."/>
            <person name="Weissenbach J."/>
            <person name="Saurin W."/>
            <person name="Quetier F."/>
            <person name="Schaefer M."/>
            <person name="Mueller-Auer S."/>
            <person name="Gabel C."/>
            <person name="Fuchs M."/>
            <person name="Benes V."/>
            <person name="Wurmbach E."/>
            <person name="Drzonek H."/>
            <person name="Erfle H."/>
            <person name="Jordan N."/>
            <person name="Bangert S."/>
            <person name="Wiedelmann R."/>
            <person name="Kranz H."/>
            <person name="Voss H."/>
            <person name="Holland R."/>
            <person name="Brandt P."/>
            <person name="Nyakatura G."/>
            <person name="Vezzi A."/>
            <person name="D'Angelo M."/>
            <person name="Pallavicini A."/>
            <person name="Toppo S."/>
            <person name="Simionati B."/>
            <person name="Conrad A."/>
            <person name="Hornischer K."/>
            <person name="Kauer G."/>
            <person name="Loehnert T.-H."/>
            <person name="Nordsiek G."/>
            <person name="Reichelt J."/>
            <person name="Scharfe M."/>
            <person name="Schoen O."/>
            <person name="Bargues M."/>
            <person name="Terol J."/>
            <person name="Climent J."/>
            <person name="Navarro P."/>
            <person name="Collado C."/>
            <person name="Perez-Perez A."/>
            <person name="Ottenwaelder B."/>
            <person name="Duchemin D."/>
            <person name="Cooke R."/>
            <person name="Laudie M."/>
            <person name="Berger-Llauro C."/>
            <person name="Purnelle B."/>
            <person name="Masuy D."/>
            <person name="de Haan M."/>
            <person name="Maarse A.C."/>
            <person name="Alcaraz J.-P."/>
            <person name="Cottet A."/>
            <person name="Casacuberta E."/>
            <person name="Monfort A."/>
            <person name="Argiriou A."/>
            <person name="Flores M."/>
            <person name="Liguori R."/>
            <person name="Vitale D."/>
            <person name="Mannhaupt G."/>
            <person name="Haase D."/>
            <person name="Schoof H."/>
            <person name="Rudd S."/>
            <person name="Zaccaria P."/>
            <person name="Mewes H.-W."/>
            <person name="Mayer K.F.X."/>
            <person name="Kaul S."/>
            <person name="Town C.D."/>
            <person name="Koo H.L."/>
            <person name="Tallon L.J."/>
            <person name="Jenkins J."/>
            <person name="Rooney T."/>
            <person name="Rizzo M."/>
            <person name="Walts A."/>
            <person name="Utterback T."/>
            <person name="Fujii C.Y."/>
            <person name="Shea T.P."/>
            <person name="Creasy T.H."/>
            <person name="Haas B."/>
            <person name="Maiti R."/>
            <person name="Wu D."/>
            <person name="Peterson J."/>
            <person name="Van Aken S."/>
            <person name="Pai G."/>
            <person name="Militscher J."/>
            <person name="Sellers P."/>
            <person name="Gill J.E."/>
            <person name="Feldblyum T.V."/>
            <person name="Preuss D."/>
            <person name="Lin X."/>
            <person name="Nierman W.C."/>
            <person name="Salzberg S.L."/>
            <person name="White O."/>
            <person name="Venter J.C."/>
            <person name="Fraser C.M."/>
            <person name="Kaneko T."/>
            <person name="Nakamura Y."/>
            <person name="Sato S."/>
            <person name="Kato T."/>
            <person name="Asamizu E."/>
            <person name="Sasamoto S."/>
            <person name="Kimura T."/>
            <person name="Idesawa K."/>
            <person name="Kawashima K."/>
            <person name="Kishida Y."/>
            <person name="Kiyokawa C."/>
            <person name="Kohara M."/>
            <person name="Matsumoto M."/>
            <person name="Matsuno A."/>
            <person name="Muraki A."/>
            <person name="Nakayama S."/>
            <person name="Nakazaki N."/>
            <person name="Shinpo S."/>
            <person name="Takeuchi C."/>
            <person name="Wada T."/>
            <person name="Watanabe A."/>
            <person name="Yamada M."/>
            <person name="Yasuda M."/>
            <person name="Tabata S."/>
        </authorList>
    </citation>
    <scope>NUCLEOTIDE SEQUENCE [LARGE SCALE GENOMIC DNA]</scope>
    <source>
        <strain>cv. Columbia</strain>
    </source>
</reference>
<reference key="2">
    <citation type="journal article" date="2017" name="Plant J.">
        <title>Araport11: a complete reannotation of the Arabidopsis thaliana reference genome.</title>
        <authorList>
            <person name="Cheng C.Y."/>
            <person name="Krishnakumar V."/>
            <person name="Chan A.P."/>
            <person name="Thibaud-Nissen F."/>
            <person name="Schobel S."/>
            <person name="Town C.D."/>
        </authorList>
    </citation>
    <scope>GENOME REANNOTATION</scope>
    <source>
        <strain>cv. Columbia</strain>
    </source>
</reference>
<reference key="3">
    <citation type="journal article" date="2003" name="Science">
        <title>Empirical analysis of transcriptional activity in the Arabidopsis genome.</title>
        <authorList>
            <person name="Yamada K."/>
            <person name="Lim J."/>
            <person name="Dale J.M."/>
            <person name="Chen H."/>
            <person name="Shinn P."/>
            <person name="Palm C.J."/>
            <person name="Southwick A.M."/>
            <person name="Wu H.C."/>
            <person name="Kim C.J."/>
            <person name="Nguyen M."/>
            <person name="Pham P.K."/>
            <person name="Cheuk R.F."/>
            <person name="Karlin-Newmann G."/>
            <person name="Liu S.X."/>
            <person name="Lam B."/>
            <person name="Sakano H."/>
            <person name="Wu T."/>
            <person name="Yu G."/>
            <person name="Miranda M."/>
            <person name="Quach H.L."/>
            <person name="Tripp M."/>
            <person name="Chang C.H."/>
            <person name="Lee J.M."/>
            <person name="Toriumi M.J."/>
            <person name="Chan M.M."/>
            <person name="Tang C.C."/>
            <person name="Onodera C.S."/>
            <person name="Deng J.M."/>
            <person name="Akiyama K."/>
            <person name="Ansari Y."/>
            <person name="Arakawa T."/>
            <person name="Banh J."/>
            <person name="Banno F."/>
            <person name="Bowser L."/>
            <person name="Brooks S.Y."/>
            <person name="Carninci P."/>
            <person name="Chao Q."/>
            <person name="Choy N."/>
            <person name="Enju A."/>
            <person name="Goldsmith A.D."/>
            <person name="Gurjal M."/>
            <person name="Hansen N.F."/>
            <person name="Hayashizaki Y."/>
            <person name="Johnson-Hopson C."/>
            <person name="Hsuan V.W."/>
            <person name="Iida K."/>
            <person name="Karnes M."/>
            <person name="Khan S."/>
            <person name="Koesema E."/>
            <person name="Ishida J."/>
            <person name="Jiang P.X."/>
            <person name="Jones T."/>
            <person name="Kawai J."/>
            <person name="Kamiya A."/>
            <person name="Meyers C."/>
            <person name="Nakajima M."/>
            <person name="Narusaka M."/>
            <person name="Seki M."/>
            <person name="Sakurai T."/>
            <person name="Satou M."/>
            <person name="Tamse R."/>
            <person name="Vaysberg M."/>
            <person name="Wallender E.K."/>
            <person name="Wong C."/>
            <person name="Yamamura Y."/>
            <person name="Yuan S."/>
            <person name="Shinozaki K."/>
            <person name="Davis R.W."/>
            <person name="Theologis A."/>
            <person name="Ecker J.R."/>
        </authorList>
    </citation>
    <scope>NUCLEOTIDE SEQUENCE [LARGE SCALE MRNA]</scope>
    <source>
        <strain>cv. Columbia</strain>
    </source>
</reference>
<reference key="4">
    <citation type="submission" date="2003-12" db="EMBL/GenBank/DDBJ databases">
        <title>Arabidopsis ORF clones.</title>
        <authorList>
            <person name="Kim C.J."/>
            <person name="Chen H."/>
            <person name="Cheuk R.F."/>
            <person name="Shinn P."/>
            <person name="Carninci P."/>
            <person name="Hayashizaki Y."/>
            <person name="Ishida J."/>
            <person name="Kamiya A."/>
            <person name="Kawai J."/>
            <person name="Narusaka M."/>
            <person name="Sakurai T."/>
            <person name="Satou M."/>
            <person name="Seki M."/>
            <person name="Shinozaki K."/>
            <person name="Ecker J.R."/>
        </authorList>
    </citation>
    <scope>NUCLEOTIDE SEQUENCE [LARGE SCALE MRNA]</scope>
    <source>
        <strain>cv. Columbia</strain>
    </source>
</reference>
<reference key="5">
    <citation type="submission" date="2006-07" db="EMBL/GenBank/DDBJ databases">
        <title>Large-scale analysis of RIKEN Arabidopsis full-length (RAFL) cDNAs.</title>
        <authorList>
            <person name="Totoki Y."/>
            <person name="Seki M."/>
            <person name="Ishida J."/>
            <person name="Nakajima M."/>
            <person name="Enju A."/>
            <person name="Kamiya A."/>
            <person name="Narusaka M."/>
            <person name="Shin-i T."/>
            <person name="Nakagawa M."/>
            <person name="Sakamoto N."/>
            <person name="Oishi K."/>
            <person name="Kohara Y."/>
            <person name="Kobayashi M."/>
            <person name="Toyoda A."/>
            <person name="Sakaki Y."/>
            <person name="Sakurai T."/>
            <person name="Iida K."/>
            <person name="Akiyama K."/>
            <person name="Satou M."/>
            <person name="Toyoda T."/>
            <person name="Konagaya A."/>
            <person name="Carninci P."/>
            <person name="Kawai J."/>
            <person name="Hayashizaki Y."/>
            <person name="Shinozaki K."/>
        </authorList>
    </citation>
    <scope>NUCLEOTIDE SEQUENCE [LARGE SCALE MRNA]</scope>
    <source>
        <strain>cv. Columbia</strain>
    </source>
</reference>
<reference key="6">
    <citation type="journal article" date="2004" name="Plant Physiol.">
        <title>Expression patterns of a novel AtCHX gene family highlight potential roles in osmotic adjustment and K+ homeostasis in pollen development.</title>
        <authorList>
            <person name="Sze H."/>
            <person name="Padmanaban S."/>
            <person name="Cellier F."/>
            <person name="Honys D."/>
            <person name="Cheng N.-H."/>
            <person name="Bock K.W."/>
            <person name="Conejero G."/>
            <person name="Li X."/>
            <person name="Twell D."/>
            <person name="Ward J.M."/>
            <person name="Hirschi K.D."/>
        </authorList>
    </citation>
    <scope>NUCLEOTIDE SEQUENCE [MRNA] OF 1-838</scope>
    <scope>TISSUE SPECIFICITY</scope>
    <scope>GENE FAMILY</scope>
    <scope>NOMENCLATURE</scope>
    <source>
        <tissue>Pollen</tissue>
    </source>
</reference>
<reference key="7">
    <citation type="journal article" date="2001" name="Plant Physiol.">
        <title>Phylogenetic relationships within cation transporter families of Arabidopsis.</title>
        <authorList>
            <person name="Maeser P."/>
            <person name="Thomine S."/>
            <person name="Schroeder J.I."/>
            <person name="Ward J.M."/>
            <person name="Hirschi K."/>
            <person name="Sze H."/>
            <person name="Talke I.N."/>
            <person name="Amtmann A."/>
            <person name="Maathuis F.J.M."/>
            <person name="Sanders D."/>
            <person name="Harper J.F."/>
            <person name="Tchieu J."/>
            <person name="Gribskov M."/>
            <person name="Persans M.W."/>
            <person name="Salt D.E."/>
            <person name="Kim S.A."/>
            <person name="Guerinot M.L."/>
        </authorList>
    </citation>
    <scope>GENE FAMILY</scope>
    <scope>NOMENCLATURE</scope>
</reference>
<reference key="8">
    <citation type="journal article" date="2007" name="Plant Physiol.">
        <title>Participation of endomembrane cation/H+ exchanger AtCHX20 in osmoregulation of guard cells.</title>
        <authorList>
            <person name="Padmanaban S."/>
            <person name="Chanroj S."/>
            <person name="Kwak J.M."/>
            <person name="Li X."/>
            <person name="Ward J.M."/>
            <person name="Sze H."/>
        </authorList>
    </citation>
    <scope>FUNCTION</scope>
    <scope>DISRUPTION PHENOTYPE</scope>
    <scope>SUBCELLULAR LOCATION</scope>
    <scope>TISSUE SPECIFICITY</scope>
</reference>
<keyword id="KW-0050">Antiport</keyword>
<keyword id="KW-0406">Ion transport</keyword>
<keyword id="KW-0472">Membrane</keyword>
<keyword id="KW-0630">Potassium</keyword>
<keyword id="KW-0633">Potassium transport</keyword>
<keyword id="KW-1185">Reference proteome</keyword>
<keyword id="KW-0812">Transmembrane</keyword>
<keyword id="KW-1133">Transmembrane helix</keyword>
<keyword id="KW-0813">Transport</keyword>
<comment type="function">
    <text evidence="4">Operates as a K(+)/H(+) antiporter that maintains K(+) homeostasis in guard cells and could regulate pH. Plays a critical role in osmoregulation through the control of stomates opening.</text>
</comment>
<comment type="subcellular location">
    <subcellularLocation>
        <location evidence="4">Endomembrane system</location>
        <topology evidence="4">Multi-pass membrane protein</topology>
    </subcellularLocation>
</comment>
<comment type="tissue specificity">
    <text evidence="3 4">Expressed in leaves and stems. Preferentially expressed in guards cells.</text>
</comment>
<comment type="disruption phenotype">
    <text evidence="4">Impaired light-induced stomatal opening.</text>
</comment>
<comment type="similarity">
    <text evidence="5">Belongs to the monovalent cation:proton antiporter 2 (CPA2) transporter (TC 2.A.37) family. CHX (TC 2.A.37.4) subfamily.</text>
</comment>
<name>CHX20_ARATH</name>
<evidence type="ECO:0000255" key="1"/>
<evidence type="ECO:0000256" key="2">
    <source>
        <dbReference type="SAM" id="MobiDB-lite"/>
    </source>
</evidence>
<evidence type="ECO:0000269" key="3">
    <source>
    </source>
</evidence>
<evidence type="ECO:0000269" key="4">
    <source>
    </source>
</evidence>
<evidence type="ECO:0000305" key="5"/>
<protein>
    <recommendedName>
        <fullName>Cation/H(+) antiporter 20</fullName>
    </recommendedName>
    <alternativeName>
        <fullName>Protein CATION/H+ EXCHANGER 20</fullName>
        <shortName>AtCHX20</shortName>
    </alternativeName>
</protein>